<organism>
    <name type="scientific">Haemophilus influenzae (strain 86-028NP)</name>
    <dbReference type="NCBI Taxonomy" id="281310"/>
    <lineage>
        <taxon>Bacteria</taxon>
        <taxon>Pseudomonadati</taxon>
        <taxon>Pseudomonadota</taxon>
        <taxon>Gammaproteobacteria</taxon>
        <taxon>Pasteurellales</taxon>
        <taxon>Pasteurellaceae</taxon>
        <taxon>Haemophilus</taxon>
    </lineage>
</organism>
<evidence type="ECO:0000255" key="1">
    <source>
        <dbReference type="HAMAP-Rule" id="MF_00278"/>
    </source>
</evidence>
<accession>Q4QN71</accession>
<reference key="1">
    <citation type="journal article" date="2005" name="J. Bacteriol.">
        <title>Genomic sequence of an otitis media isolate of nontypeable Haemophilus influenzae: comparative study with H. influenzae serotype d, strain KW20.</title>
        <authorList>
            <person name="Harrison A."/>
            <person name="Dyer D.W."/>
            <person name="Gillaspy A."/>
            <person name="Ray W.C."/>
            <person name="Mungur R."/>
            <person name="Carson M.B."/>
            <person name="Zhong H."/>
            <person name="Gipson J."/>
            <person name="Gipson M."/>
            <person name="Johnson L.S."/>
            <person name="Lewis L."/>
            <person name="Bakaletz L.O."/>
            <person name="Munson R.S. Jr."/>
        </authorList>
    </citation>
    <scope>NUCLEOTIDE SEQUENCE [LARGE SCALE GENOMIC DNA]</scope>
    <source>
        <strain>86-028NP</strain>
    </source>
</reference>
<feature type="chain" id="PRO_0000231726" description="Imidazole glycerol phosphate synthase subunit HisH">
    <location>
        <begin position="1"/>
        <end position="199"/>
    </location>
</feature>
<feature type="domain" description="Glutamine amidotransferase type-1" evidence="1">
    <location>
        <begin position="3"/>
        <end position="199"/>
    </location>
</feature>
<feature type="active site" description="Nucleophile" evidence="1">
    <location>
        <position position="78"/>
    </location>
</feature>
<feature type="active site" evidence="1">
    <location>
        <position position="178"/>
    </location>
</feature>
<feature type="active site" evidence="1">
    <location>
        <position position="180"/>
    </location>
</feature>
<name>HIS5_HAEI8</name>
<protein>
    <recommendedName>
        <fullName evidence="1">Imidazole glycerol phosphate synthase subunit HisH</fullName>
        <ecNumber evidence="1">4.3.2.10</ecNumber>
    </recommendedName>
    <alternativeName>
        <fullName evidence="1">IGP synthase glutaminase subunit</fullName>
        <ecNumber evidence="1">3.5.1.2</ecNumber>
    </alternativeName>
    <alternativeName>
        <fullName evidence="1">IGP synthase subunit HisH</fullName>
    </alternativeName>
    <alternativeName>
        <fullName evidence="1">ImGP synthase subunit HisH</fullName>
        <shortName evidence="1">IGPS subunit HisH</shortName>
    </alternativeName>
</protein>
<keyword id="KW-0028">Amino-acid biosynthesis</keyword>
<keyword id="KW-0963">Cytoplasm</keyword>
<keyword id="KW-0315">Glutamine amidotransferase</keyword>
<keyword id="KW-0368">Histidine biosynthesis</keyword>
<keyword id="KW-0378">Hydrolase</keyword>
<keyword id="KW-0456">Lyase</keyword>
<gene>
    <name evidence="1" type="primary">hisH</name>
    <name type="ordered locus">NTHI0603</name>
</gene>
<sequence>MTNITIIDTGCANLSSVKFAFDRLGYNTEITFDLNKIKSADKLILPGVGTANAAMYNLQERQLIETIQNLTQPVLGICLGMQLMTEFSEEGNVPTLNLISGKTNRIPDTGLPLPQMGWNRVQFVKNCPLFDGIVQNSHFYFVHSYAVSPNEHSVAISNYGVNFSAAIAKENFYGVQFHPERSGKNGALLLKNFVEKVPF</sequence>
<proteinExistence type="inferred from homology"/>
<dbReference type="EC" id="4.3.2.10" evidence="1"/>
<dbReference type="EC" id="3.5.1.2" evidence="1"/>
<dbReference type="EMBL" id="CP000057">
    <property type="protein sequence ID" value="AAX87526.1"/>
    <property type="molecule type" value="Genomic_DNA"/>
</dbReference>
<dbReference type="RefSeq" id="WP_005649382.1">
    <property type="nucleotide sequence ID" value="NC_007146.2"/>
</dbReference>
<dbReference type="SMR" id="Q4QN71"/>
<dbReference type="MEROPS" id="C26.965"/>
<dbReference type="GeneID" id="93219486"/>
<dbReference type="KEGG" id="hit:NTHI0603"/>
<dbReference type="HOGENOM" id="CLU_071837_0_0_6"/>
<dbReference type="UniPathway" id="UPA00031">
    <property type="reaction ID" value="UER00010"/>
</dbReference>
<dbReference type="Proteomes" id="UP000002525">
    <property type="component" value="Chromosome"/>
</dbReference>
<dbReference type="GO" id="GO:0005737">
    <property type="term" value="C:cytoplasm"/>
    <property type="evidence" value="ECO:0007669"/>
    <property type="project" value="UniProtKB-SubCell"/>
</dbReference>
<dbReference type="GO" id="GO:0004359">
    <property type="term" value="F:glutaminase activity"/>
    <property type="evidence" value="ECO:0007669"/>
    <property type="project" value="UniProtKB-EC"/>
</dbReference>
<dbReference type="GO" id="GO:0000107">
    <property type="term" value="F:imidazoleglycerol-phosphate synthase activity"/>
    <property type="evidence" value="ECO:0007669"/>
    <property type="project" value="UniProtKB-UniRule"/>
</dbReference>
<dbReference type="GO" id="GO:0016829">
    <property type="term" value="F:lyase activity"/>
    <property type="evidence" value="ECO:0007669"/>
    <property type="project" value="UniProtKB-KW"/>
</dbReference>
<dbReference type="GO" id="GO:0000105">
    <property type="term" value="P:L-histidine biosynthetic process"/>
    <property type="evidence" value="ECO:0007669"/>
    <property type="project" value="UniProtKB-UniRule"/>
</dbReference>
<dbReference type="CDD" id="cd01748">
    <property type="entry name" value="GATase1_IGP_Synthase"/>
    <property type="match status" value="1"/>
</dbReference>
<dbReference type="FunFam" id="3.40.50.880:FF:000009">
    <property type="entry name" value="Imidazole glycerol phosphate synthase subunit HisH"/>
    <property type="match status" value="1"/>
</dbReference>
<dbReference type="Gene3D" id="3.40.50.880">
    <property type="match status" value="1"/>
</dbReference>
<dbReference type="HAMAP" id="MF_00278">
    <property type="entry name" value="HisH"/>
    <property type="match status" value="1"/>
</dbReference>
<dbReference type="InterPro" id="IPR029062">
    <property type="entry name" value="Class_I_gatase-like"/>
</dbReference>
<dbReference type="InterPro" id="IPR017926">
    <property type="entry name" value="GATASE"/>
</dbReference>
<dbReference type="InterPro" id="IPR010139">
    <property type="entry name" value="Imidazole-glycPsynth_HisH"/>
</dbReference>
<dbReference type="NCBIfam" id="TIGR01855">
    <property type="entry name" value="IMP_synth_hisH"/>
    <property type="match status" value="1"/>
</dbReference>
<dbReference type="PANTHER" id="PTHR42701">
    <property type="entry name" value="IMIDAZOLE GLYCEROL PHOSPHATE SYNTHASE SUBUNIT HISH"/>
    <property type="match status" value="1"/>
</dbReference>
<dbReference type="PANTHER" id="PTHR42701:SF1">
    <property type="entry name" value="IMIDAZOLE GLYCEROL PHOSPHATE SYNTHASE SUBUNIT HISH"/>
    <property type="match status" value="1"/>
</dbReference>
<dbReference type="Pfam" id="PF00117">
    <property type="entry name" value="GATase"/>
    <property type="match status" value="1"/>
</dbReference>
<dbReference type="PIRSF" id="PIRSF000495">
    <property type="entry name" value="Amidotransf_hisH"/>
    <property type="match status" value="1"/>
</dbReference>
<dbReference type="PRINTS" id="PR00097">
    <property type="entry name" value="ANTSNTHASEII"/>
</dbReference>
<dbReference type="SUPFAM" id="SSF52317">
    <property type="entry name" value="Class I glutamine amidotransferase-like"/>
    <property type="match status" value="1"/>
</dbReference>
<dbReference type="PROSITE" id="PS51273">
    <property type="entry name" value="GATASE_TYPE_1"/>
    <property type="match status" value="1"/>
</dbReference>
<comment type="function">
    <text evidence="1">IGPS catalyzes the conversion of PRFAR and glutamine to IGP, AICAR and glutamate. The HisH subunit catalyzes the hydrolysis of glutamine to glutamate and ammonia as part of the synthesis of IGP and AICAR. The resulting ammonia molecule is channeled to the active site of HisF.</text>
</comment>
<comment type="catalytic activity">
    <reaction evidence="1">
        <text>5-[(5-phospho-1-deoxy-D-ribulos-1-ylimino)methylamino]-1-(5-phospho-beta-D-ribosyl)imidazole-4-carboxamide + L-glutamine = D-erythro-1-(imidazol-4-yl)glycerol 3-phosphate + 5-amino-1-(5-phospho-beta-D-ribosyl)imidazole-4-carboxamide + L-glutamate + H(+)</text>
        <dbReference type="Rhea" id="RHEA:24793"/>
        <dbReference type="ChEBI" id="CHEBI:15378"/>
        <dbReference type="ChEBI" id="CHEBI:29985"/>
        <dbReference type="ChEBI" id="CHEBI:58278"/>
        <dbReference type="ChEBI" id="CHEBI:58359"/>
        <dbReference type="ChEBI" id="CHEBI:58475"/>
        <dbReference type="ChEBI" id="CHEBI:58525"/>
        <dbReference type="EC" id="4.3.2.10"/>
    </reaction>
</comment>
<comment type="catalytic activity">
    <reaction evidence="1">
        <text>L-glutamine + H2O = L-glutamate + NH4(+)</text>
        <dbReference type="Rhea" id="RHEA:15889"/>
        <dbReference type="ChEBI" id="CHEBI:15377"/>
        <dbReference type="ChEBI" id="CHEBI:28938"/>
        <dbReference type="ChEBI" id="CHEBI:29985"/>
        <dbReference type="ChEBI" id="CHEBI:58359"/>
        <dbReference type="EC" id="3.5.1.2"/>
    </reaction>
</comment>
<comment type="pathway">
    <text evidence="1">Amino-acid biosynthesis; L-histidine biosynthesis; L-histidine from 5-phospho-alpha-D-ribose 1-diphosphate: step 5/9.</text>
</comment>
<comment type="subunit">
    <text evidence="1">Heterodimer of HisH and HisF.</text>
</comment>
<comment type="subcellular location">
    <subcellularLocation>
        <location evidence="1">Cytoplasm</location>
    </subcellularLocation>
</comment>